<organism>
    <name type="scientific">Xylella fastidiosa (strain 9a5c)</name>
    <dbReference type="NCBI Taxonomy" id="160492"/>
    <lineage>
        <taxon>Bacteria</taxon>
        <taxon>Pseudomonadati</taxon>
        <taxon>Pseudomonadota</taxon>
        <taxon>Gammaproteobacteria</taxon>
        <taxon>Lysobacterales</taxon>
        <taxon>Lysobacteraceae</taxon>
        <taxon>Xylella</taxon>
    </lineage>
</organism>
<name>PAND_XYLFA</name>
<accession>Q9PGR7</accession>
<protein>
    <recommendedName>
        <fullName evidence="1">Aspartate 1-decarboxylase</fullName>
        <ecNumber evidence="1">4.1.1.11</ecNumber>
    </recommendedName>
    <alternativeName>
        <fullName evidence="1">Aspartate alpha-decarboxylase</fullName>
    </alternativeName>
    <component>
        <recommendedName>
            <fullName evidence="1">Aspartate 1-decarboxylase beta chain</fullName>
        </recommendedName>
    </component>
    <component>
        <recommendedName>
            <fullName evidence="1">Aspartate 1-decarboxylase alpha chain</fullName>
        </recommendedName>
    </component>
</protein>
<dbReference type="EC" id="4.1.1.11" evidence="1"/>
<dbReference type="EMBL" id="AE003849">
    <property type="protein sequence ID" value="AAF83044.1"/>
    <property type="status" value="ALT_INIT"/>
    <property type="molecule type" value="Genomic_DNA"/>
</dbReference>
<dbReference type="PIR" id="G82832">
    <property type="entry name" value="G82832"/>
</dbReference>
<dbReference type="RefSeq" id="WP_010892772.1">
    <property type="nucleotide sequence ID" value="NC_002488.3"/>
</dbReference>
<dbReference type="SMR" id="Q9PGR7"/>
<dbReference type="STRING" id="160492.XF_0231"/>
<dbReference type="KEGG" id="xfa:XF_0231"/>
<dbReference type="eggNOG" id="COG0853">
    <property type="taxonomic scope" value="Bacteria"/>
</dbReference>
<dbReference type="HOGENOM" id="CLU_115305_2_1_6"/>
<dbReference type="UniPathway" id="UPA00028">
    <property type="reaction ID" value="UER00002"/>
</dbReference>
<dbReference type="Proteomes" id="UP000000812">
    <property type="component" value="Chromosome"/>
</dbReference>
<dbReference type="GO" id="GO:0005829">
    <property type="term" value="C:cytosol"/>
    <property type="evidence" value="ECO:0007669"/>
    <property type="project" value="TreeGrafter"/>
</dbReference>
<dbReference type="GO" id="GO:0004068">
    <property type="term" value="F:aspartate 1-decarboxylase activity"/>
    <property type="evidence" value="ECO:0007669"/>
    <property type="project" value="UniProtKB-UniRule"/>
</dbReference>
<dbReference type="GO" id="GO:0006523">
    <property type="term" value="P:alanine biosynthetic process"/>
    <property type="evidence" value="ECO:0007669"/>
    <property type="project" value="InterPro"/>
</dbReference>
<dbReference type="GO" id="GO:0015940">
    <property type="term" value="P:pantothenate biosynthetic process"/>
    <property type="evidence" value="ECO:0007669"/>
    <property type="project" value="UniProtKB-UniRule"/>
</dbReference>
<dbReference type="CDD" id="cd06919">
    <property type="entry name" value="Asp_decarbox"/>
    <property type="match status" value="1"/>
</dbReference>
<dbReference type="Gene3D" id="2.40.40.20">
    <property type="match status" value="1"/>
</dbReference>
<dbReference type="HAMAP" id="MF_00446">
    <property type="entry name" value="PanD"/>
    <property type="match status" value="1"/>
</dbReference>
<dbReference type="InterPro" id="IPR009010">
    <property type="entry name" value="Asp_de-COase-like_dom_sf"/>
</dbReference>
<dbReference type="InterPro" id="IPR003190">
    <property type="entry name" value="Asp_decarbox"/>
</dbReference>
<dbReference type="NCBIfam" id="TIGR00223">
    <property type="entry name" value="panD"/>
    <property type="match status" value="1"/>
</dbReference>
<dbReference type="PANTHER" id="PTHR21012">
    <property type="entry name" value="ASPARTATE 1-DECARBOXYLASE"/>
    <property type="match status" value="1"/>
</dbReference>
<dbReference type="PANTHER" id="PTHR21012:SF0">
    <property type="entry name" value="ASPARTATE 1-DECARBOXYLASE"/>
    <property type="match status" value="1"/>
</dbReference>
<dbReference type="Pfam" id="PF02261">
    <property type="entry name" value="Asp_decarbox"/>
    <property type="match status" value="1"/>
</dbReference>
<dbReference type="PIRSF" id="PIRSF006246">
    <property type="entry name" value="Asp_decarbox"/>
    <property type="match status" value="1"/>
</dbReference>
<dbReference type="SUPFAM" id="SSF50692">
    <property type="entry name" value="ADC-like"/>
    <property type="match status" value="1"/>
</dbReference>
<feature type="chain" id="PRO_0000023193" description="Aspartate 1-decarboxylase beta chain" evidence="1">
    <location>
        <begin position="1"/>
        <end position="24"/>
    </location>
</feature>
<feature type="chain" id="PRO_0000023194" description="Aspartate 1-decarboxylase alpha chain" evidence="1">
    <location>
        <begin position="25"/>
        <end position="126"/>
    </location>
</feature>
<feature type="active site" description="Schiff-base intermediate with substrate; via pyruvic acid" evidence="1">
    <location>
        <position position="25"/>
    </location>
</feature>
<feature type="active site" description="Proton donor" evidence="1">
    <location>
        <position position="58"/>
    </location>
</feature>
<feature type="binding site" evidence="1">
    <location>
        <position position="57"/>
    </location>
    <ligand>
        <name>substrate</name>
    </ligand>
</feature>
<feature type="binding site" evidence="1">
    <location>
        <begin position="73"/>
        <end position="75"/>
    </location>
    <ligand>
        <name>substrate</name>
    </ligand>
</feature>
<feature type="modified residue" description="Pyruvic acid (Ser)" evidence="1">
    <location>
        <position position="25"/>
    </location>
</feature>
<evidence type="ECO:0000255" key="1">
    <source>
        <dbReference type="HAMAP-Rule" id="MF_00446"/>
    </source>
</evidence>
<evidence type="ECO:0000305" key="2"/>
<sequence>MQLSLLKAKIHRATVSHSELNYEGSIAIDGLLLEAAGLYEFEKVHIWNVTNGARFTTYAIRAEHGSGIISVNGGAARYVQVGDLVIVAAFAQMSEDEAAVFSPNLVYVDAANAMTHTNHSIPTQVA</sequence>
<gene>
    <name evidence="1" type="primary">panD</name>
    <name type="ordered locus">XF_0231</name>
</gene>
<keyword id="KW-0068">Autocatalytic cleavage</keyword>
<keyword id="KW-0963">Cytoplasm</keyword>
<keyword id="KW-0210">Decarboxylase</keyword>
<keyword id="KW-0456">Lyase</keyword>
<keyword id="KW-0566">Pantothenate biosynthesis</keyword>
<keyword id="KW-0670">Pyruvate</keyword>
<keyword id="KW-0704">Schiff base</keyword>
<keyword id="KW-0865">Zymogen</keyword>
<reference key="1">
    <citation type="journal article" date="2000" name="Nature">
        <title>The genome sequence of the plant pathogen Xylella fastidiosa.</title>
        <authorList>
            <person name="Simpson A.J.G."/>
            <person name="Reinach F.C."/>
            <person name="Arruda P."/>
            <person name="Abreu F.A."/>
            <person name="Acencio M."/>
            <person name="Alvarenga R."/>
            <person name="Alves L.M.C."/>
            <person name="Araya J.E."/>
            <person name="Baia G.S."/>
            <person name="Baptista C.S."/>
            <person name="Barros M.H."/>
            <person name="Bonaccorsi E.D."/>
            <person name="Bordin S."/>
            <person name="Bove J.M."/>
            <person name="Briones M.R.S."/>
            <person name="Bueno M.R.P."/>
            <person name="Camargo A.A."/>
            <person name="Camargo L.E.A."/>
            <person name="Carraro D.M."/>
            <person name="Carrer H."/>
            <person name="Colauto N.B."/>
            <person name="Colombo C."/>
            <person name="Costa F.F."/>
            <person name="Costa M.C.R."/>
            <person name="Costa-Neto C.M."/>
            <person name="Coutinho L.L."/>
            <person name="Cristofani M."/>
            <person name="Dias-Neto E."/>
            <person name="Docena C."/>
            <person name="El-Dorry H."/>
            <person name="Facincani A.P."/>
            <person name="Ferreira A.J.S."/>
            <person name="Ferreira V.C.A."/>
            <person name="Ferro J.A."/>
            <person name="Fraga J.S."/>
            <person name="Franca S.C."/>
            <person name="Franco M.C."/>
            <person name="Frohme M."/>
            <person name="Furlan L.R."/>
            <person name="Garnier M."/>
            <person name="Goldman G.H."/>
            <person name="Goldman M.H.S."/>
            <person name="Gomes S.L."/>
            <person name="Gruber A."/>
            <person name="Ho P.L."/>
            <person name="Hoheisel J.D."/>
            <person name="Junqueira M.L."/>
            <person name="Kemper E.L."/>
            <person name="Kitajima J.P."/>
            <person name="Krieger J.E."/>
            <person name="Kuramae E.E."/>
            <person name="Laigret F."/>
            <person name="Lambais M.R."/>
            <person name="Leite L.C.C."/>
            <person name="Lemos E.G.M."/>
            <person name="Lemos M.V.F."/>
            <person name="Lopes S.A."/>
            <person name="Lopes C.R."/>
            <person name="Machado J.A."/>
            <person name="Machado M.A."/>
            <person name="Madeira A.M.B.N."/>
            <person name="Madeira H.M.F."/>
            <person name="Marino C.L."/>
            <person name="Marques M.V."/>
            <person name="Martins E.A.L."/>
            <person name="Martins E.M.F."/>
            <person name="Matsukuma A.Y."/>
            <person name="Menck C.F.M."/>
            <person name="Miracca E.C."/>
            <person name="Miyaki C.Y."/>
            <person name="Monteiro-Vitorello C.B."/>
            <person name="Moon D.H."/>
            <person name="Nagai M.A."/>
            <person name="Nascimento A.L.T.O."/>
            <person name="Netto L.E.S."/>
            <person name="Nhani A. Jr."/>
            <person name="Nobrega F.G."/>
            <person name="Nunes L.R."/>
            <person name="Oliveira M.A."/>
            <person name="de Oliveira M.C."/>
            <person name="de Oliveira R.C."/>
            <person name="Palmieri D.A."/>
            <person name="Paris A."/>
            <person name="Peixoto B.R."/>
            <person name="Pereira G.A.G."/>
            <person name="Pereira H.A. Jr."/>
            <person name="Pesquero J.B."/>
            <person name="Quaggio R.B."/>
            <person name="Roberto P.G."/>
            <person name="Rodrigues V."/>
            <person name="de Rosa A.J.M."/>
            <person name="de Rosa V.E. Jr."/>
            <person name="de Sa R.G."/>
            <person name="Santelli R.V."/>
            <person name="Sawasaki H.E."/>
            <person name="da Silva A.C.R."/>
            <person name="da Silva A.M."/>
            <person name="da Silva F.R."/>
            <person name="Silva W.A. Jr."/>
            <person name="da Silveira J.F."/>
            <person name="Silvestri M.L.Z."/>
            <person name="Siqueira W.J."/>
            <person name="de Souza A.A."/>
            <person name="de Souza A.P."/>
            <person name="Terenzi M.F."/>
            <person name="Truffi D."/>
            <person name="Tsai S.M."/>
            <person name="Tsuhako M.H."/>
            <person name="Vallada H."/>
            <person name="Van Sluys M.A."/>
            <person name="Verjovski-Almeida S."/>
            <person name="Vettore A.L."/>
            <person name="Zago M.A."/>
            <person name="Zatz M."/>
            <person name="Meidanis J."/>
            <person name="Setubal J.C."/>
        </authorList>
    </citation>
    <scope>NUCLEOTIDE SEQUENCE [LARGE SCALE GENOMIC DNA]</scope>
    <source>
        <strain>9a5c</strain>
    </source>
</reference>
<comment type="function">
    <text evidence="1">Catalyzes the pyruvoyl-dependent decarboxylation of aspartate to produce beta-alanine.</text>
</comment>
<comment type="catalytic activity">
    <reaction evidence="1">
        <text>L-aspartate + H(+) = beta-alanine + CO2</text>
        <dbReference type="Rhea" id="RHEA:19497"/>
        <dbReference type="ChEBI" id="CHEBI:15378"/>
        <dbReference type="ChEBI" id="CHEBI:16526"/>
        <dbReference type="ChEBI" id="CHEBI:29991"/>
        <dbReference type="ChEBI" id="CHEBI:57966"/>
        <dbReference type="EC" id="4.1.1.11"/>
    </reaction>
</comment>
<comment type="cofactor">
    <cofactor evidence="1">
        <name>pyruvate</name>
        <dbReference type="ChEBI" id="CHEBI:15361"/>
    </cofactor>
    <text evidence="1">Binds 1 pyruvoyl group covalently per subunit.</text>
</comment>
<comment type="pathway">
    <text evidence="1">Cofactor biosynthesis; (R)-pantothenate biosynthesis; beta-alanine from L-aspartate: step 1/1.</text>
</comment>
<comment type="subunit">
    <text evidence="1">Heterooctamer of four alpha and four beta subunits.</text>
</comment>
<comment type="subcellular location">
    <subcellularLocation>
        <location evidence="1">Cytoplasm</location>
    </subcellularLocation>
</comment>
<comment type="PTM">
    <text evidence="1">Is synthesized initially as an inactive proenzyme, which is activated by self-cleavage at a specific serine bond to produce a beta-subunit with a hydroxyl group at its C-terminus and an alpha-subunit with a pyruvoyl group at its N-terminus.</text>
</comment>
<comment type="similarity">
    <text evidence="1">Belongs to the PanD family.</text>
</comment>
<comment type="sequence caution" evidence="2">
    <conflict type="erroneous initiation">
        <sequence resource="EMBL-CDS" id="AAF83044"/>
    </conflict>
</comment>
<proteinExistence type="inferred from homology"/>